<sequence>MTLQIGVIGCGAIGQDHIRRLTRTLSGARVVAVNDIDPQQARDAVTKYGLDAEIYGDGHDVVAAADVQALLVTSWGPTHEAFVLDAIAHGKPVFCEKPLAVTADGCMRIVEAEVAHGKRLVQVGFMRPYDEGYRALKRVIDSGEIGAPLMLHCAHRNQSVGERYTTDMAITDTLIHELDVLRWLLGEDYASAQVVYPKKTRHASAHLADPQIVLLETVSGVRIDVEIFVNCQYGYDIQCEVVGENGIAKLPDPPAVGLKHAARQSVEIMTDWKERFIASYDVELQAFIDGVRAGALTGPSAWDGYAAAVAADACVRAQRSAAVEPIAMAERPAFYRG</sequence>
<keyword id="KW-0520">NAD</keyword>
<keyword id="KW-0560">Oxidoreductase</keyword>
<accession>A4JDP6</accession>
<feature type="chain" id="PRO_0000352565" description="Inositol 2-dehydrogenase">
    <location>
        <begin position="1"/>
        <end position="337"/>
    </location>
</feature>
<dbReference type="EC" id="1.1.1.18" evidence="1"/>
<dbReference type="EMBL" id="CP000614">
    <property type="protein sequence ID" value="ABO54399.1"/>
    <property type="molecule type" value="Genomic_DNA"/>
</dbReference>
<dbReference type="SMR" id="A4JDP6"/>
<dbReference type="KEGG" id="bvi:Bcep1808_1391"/>
<dbReference type="eggNOG" id="COG0673">
    <property type="taxonomic scope" value="Bacteria"/>
</dbReference>
<dbReference type="HOGENOM" id="CLU_023194_0_1_4"/>
<dbReference type="Proteomes" id="UP000002287">
    <property type="component" value="Chromosome 1"/>
</dbReference>
<dbReference type="GO" id="GO:0050112">
    <property type="term" value="F:inositol 2-dehydrogenase (NAD+) activity"/>
    <property type="evidence" value="ECO:0007669"/>
    <property type="project" value="UniProtKB-UniRule"/>
</dbReference>
<dbReference type="GO" id="GO:0000166">
    <property type="term" value="F:nucleotide binding"/>
    <property type="evidence" value="ECO:0007669"/>
    <property type="project" value="InterPro"/>
</dbReference>
<dbReference type="GO" id="GO:0019310">
    <property type="term" value="P:inositol catabolic process"/>
    <property type="evidence" value="ECO:0007669"/>
    <property type="project" value="UniProtKB-UniRule"/>
</dbReference>
<dbReference type="Gene3D" id="3.30.360.10">
    <property type="entry name" value="Dihydrodipicolinate Reductase, domain 2"/>
    <property type="match status" value="1"/>
</dbReference>
<dbReference type="Gene3D" id="3.40.50.720">
    <property type="entry name" value="NAD(P)-binding Rossmann-like Domain"/>
    <property type="match status" value="1"/>
</dbReference>
<dbReference type="HAMAP" id="MF_01671">
    <property type="entry name" value="IolG"/>
    <property type="match status" value="1"/>
</dbReference>
<dbReference type="InterPro" id="IPR050424">
    <property type="entry name" value="Gfo-Idh-MocA_inositol_DH"/>
</dbReference>
<dbReference type="InterPro" id="IPR004104">
    <property type="entry name" value="Gfo/Idh/MocA-like_OxRdtase_C"/>
</dbReference>
<dbReference type="InterPro" id="IPR000683">
    <property type="entry name" value="Gfo/Idh/MocA-like_OxRdtase_N"/>
</dbReference>
<dbReference type="InterPro" id="IPR023794">
    <property type="entry name" value="MI/DCI_dehydrogenase"/>
</dbReference>
<dbReference type="InterPro" id="IPR036291">
    <property type="entry name" value="NAD(P)-bd_dom_sf"/>
</dbReference>
<dbReference type="PANTHER" id="PTHR43593">
    <property type="match status" value="1"/>
</dbReference>
<dbReference type="PANTHER" id="PTHR43593:SF1">
    <property type="entry name" value="INOSITOL 2-DEHYDROGENASE"/>
    <property type="match status" value="1"/>
</dbReference>
<dbReference type="Pfam" id="PF01408">
    <property type="entry name" value="GFO_IDH_MocA"/>
    <property type="match status" value="1"/>
</dbReference>
<dbReference type="Pfam" id="PF02894">
    <property type="entry name" value="GFO_IDH_MocA_C"/>
    <property type="match status" value="1"/>
</dbReference>
<dbReference type="SUPFAM" id="SSF55347">
    <property type="entry name" value="Glyceraldehyde-3-phosphate dehydrogenase-like, C-terminal domain"/>
    <property type="match status" value="1"/>
</dbReference>
<dbReference type="SUPFAM" id="SSF51735">
    <property type="entry name" value="NAD(P)-binding Rossmann-fold domains"/>
    <property type="match status" value="1"/>
</dbReference>
<name>IOLG_BURVG</name>
<organism>
    <name type="scientific">Burkholderia vietnamiensis (strain G4 / LMG 22486)</name>
    <name type="common">Burkholderia cepacia (strain R1808)</name>
    <dbReference type="NCBI Taxonomy" id="269482"/>
    <lineage>
        <taxon>Bacteria</taxon>
        <taxon>Pseudomonadati</taxon>
        <taxon>Pseudomonadota</taxon>
        <taxon>Betaproteobacteria</taxon>
        <taxon>Burkholderiales</taxon>
        <taxon>Burkholderiaceae</taxon>
        <taxon>Burkholderia</taxon>
        <taxon>Burkholderia cepacia complex</taxon>
    </lineage>
</organism>
<reference key="1">
    <citation type="submission" date="2007-03" db="EMBL/GenBank/DDBJ databases">
        <title>Complete sequence of chromosome 1 of Burkholderia vietnamiensis G4.</title>
        <authorList>
            <consortium name="US DOE Joint Genome Institute"/>
            <person name="Copeland A."/>
            <person name="Lucas S."/>
            <person name="Lapidus A."/>
            <person name="Barry K."/>
            <person name="Detter J.C."/>
            <person name="Glavina del Rio T."/>
            <person name="Hammon N."/>
            <person name="Israni S."/>
            <person name="Dalin E."/>
            <person name="Tice H."/>
            <person name="Pitluck S."/>
            <person name="Chain P."/>
            <person name="Malfatti S."/>
            <person name="Shin M."/>
            <person name="Vergez L."/>
            <person name="Schmutz J."/>
            <person name="Larimer F."/>
            <person name="Land M."/>
            <person name="Hauser L."/>
            <person name="Kyrpides N."/>
            <person name="Tiedje J."/>
            <person name="Richardson P."/>
        </authorList>
    </citation>
    <scope>NUCLEOTIDE SEQUENCE [LARGE SCALE GENOMIC DNA]</scope>
    <source>
        <strain>G4 / LMG 22486</strain>
    </source>
</reference>
<gene>
    <name evidence="1" type="primary">iolG</name>
    <name type="ordered locus">Bcep1808_1391</name>
</gene>
<evidence type="ECO:0000255" key="1">
    <source>
        <dbReference type="HAMAP-Rule" id="MF_01671"/>
    </source>
</evidence>
<comment type="function">
    <text evidence="1">Involved in the oxidation of myo-inositol (MI) to 2-keto-myo-inositol (2KMI or 2-inosose).</text>
</comment>
<comment type="catalytic activity">
    <reaction evidence="1">
        <text>myo-inositol + NAD(+) = scyllo-inosose + NADH + H(+)</text>
        <dbReference type="Rhea" id="RHEA:16949"/>
        <dbReference type="ChEBI" id="CHEBI:15378"/>
        <dbReference type="ChEBI" id="CHEBI:17268"/>
        <dbReference type="ChEBI" id="CHEBI:17811"/>
        <dbReference type="ChEBI" id="CHEBI:57540"/>
        <dbReference type="ChEBI" id="CHEBI:57945"/>
        <dbReference type="EC" id="1.1.1.18"/>
    </reaction>
</comment>
<comment type="subunit">
    <text evidence="1">Homotetramer.</text>
</comment>
<comment type="similarity">
    <text evidence="1">Belongs to the Gfo/Idh/MocA family.</text>
</comment>
<protein>
    <recommendedName>
        <fullName evidence="1">Inositol 2-dehydrogenase</fullName>
        <ecNumber evidence="1">1.1.1.18</ecNumber>
    </recommendedName>
    <alternativeName>
        <fullName evidence="1">Myo-inositol 2-dehydrogenase</fullName>
        <shortName evidence="1">MI 2-dehydrogenase</shortName>
    </alternativeName>
</protein>
<proteinExistence type="inferred from homology"/>